<evidence type="ECO:0000250" key="1">
    <source>
        <dbReference type="UniProtKB" id="Q9Y2I8"/>
    </source>
</evidence>
<evidence type="ECO:0000256" key="2">
    <source>
        <dbReference type="SAM" id="MobiDB-lite"/>
    </source>
</evidence>
<name>WDR37_XENTR</name>
<organism>
    <name type="scientific">Xenopus tropicalis</name>
    <name type="common">Western clawed frog</name>
    <name type="synonym">Silurana tropicalis</name>
    <dbReference type="NCBI Taxonomy" id="8364"/>
    <lineage>
        <taxon>Eukaryota</taxon>
        <taxon>Metazoa</taxon>
        <taxon>Chordata</taxon>
        <taxon>Craniata</taxon>
        <taxon>Vertebrata</taxon>
        <taxon>Euteleostomi</taxon>
        <taxon>Amphibia</taxon>
        <taxon>Batrachia</taxon>
        <taxon>Anura</taxon>
        <taxon>Pipoidea</taxon>
        <taxon>Pipidae</taxon>
        <taxon>Xenopodinae</taxon>
        <taxon>Xenopus</taxon>
        <taxon>Silurana</taxon>
    </lineage>
</organism>
<accession>A4IIX9</accession>
<feature type="chain" id="PRO_0000345132" description="WD repeat-containing protein 37">
    <location>
        <begin position="1"/>
        <end position="494"/>
    </location>
</feature>
<feature type="repeat" description="WD 1">
    <location>
        <begin position="154"/>
        <end position="194"/>
    </location>
</feature>
<feature type="repeat" description="WD 2">
    <location>
        <begin position="197"/>
        <end position="236"/>
    </location>
</feature>
<feature type="repeat" description="WD 3">
    <location>
        <begin position="279"/>
        <end position="318"/>
    </location>
</feature>
<feature type="repeat" description="WD 4">
    <location>
        <begin position="321"/>
        <end position="360"/>
    </location>
</feature>
<feature type="repeat" description="WD 5">
    <location>
        <begin position="365"/>
        <end position="403"/>
    </location>
</feature>
<feature type="repeat" description="WD 6">
    <location>
        <begin position="406"/>
        <end position="445"/>
    </location>
</feature>
<feature type="repeat" description="WD 7">
    <location>
        <begin position="452"/>
        <end position="493"/>
    </location>
</feature>
<feature type="region of interest" description="Disordered" evidence="2">
    <location>
        <begin position="1"/>
        <end position="38"/>
    </location>
</feature>
<feature type="region of interest" description="Disordered" evidence="2">
    <location>
        <begin position="236"/>
        <end position="266"/>
    </location>
</feature>
<feature type="compositionally biased region" description="Polar residues" evidence="2">
    <location>
        <begin position="22"/>
        <end position="31"/>
    </location>
</feature>
<feature type="compositionally biased region" description="Acidic residues" evidence="2">
    <location>
        <begin position="245"/>
        <end position="263"/>
    </location>
</feature>
<reference key="1">
    <citation type="submission" date="2007-03" db="EMBL/GenBank/DDBJ databases">
        <authorList>
            <consortium name="NIH - Xenopus Gene Collection (XGC) project"/>
        </authorList>
    </citation>
    <scope>NUCLEOTIDE SEQUENCE [LARGE SCALE MRNA]</scope>
    <source>
        <tissue>Brain</tissue>
    </source>
</reference>
<comment type="subcellular location">
    <subcellularLocation>
        <location evidence="1">Cytoplasm</location>
    </subcellularLocation>
    <subcellularLocation>
        <location evidence="1">Nucleus</location>
    </subcellularLocation>
</comment>
<gene>
    <name type="primary">wdr37</name>
</gene>
<keyword id="KW-0963">Cytoplasm</keyword>
<keyword id="KW-0539">Nucleus</keyword>
<keyword id="KW-1185">Reference proteome</keyword>
<keyword id="KW-0677">Repeat</keyword>
<keyword id="KW-0853">WD repeat</keyword>
<protein>
    <recommendedName>
        <fullName>WD repeat-containing protein 37</fullName>
    </recommendedName>
</protein>
<sequence length="494" mass="54870">MPTESGSWAAARQTKQKRKSHSLSIKRTNSSEQDRPGLQREMLEGQDSKLPSSVRNTLLELFGQIEREFENLYLENLELRREIDTLNDRLAVEGQAIDGAELSKGQMKTKASHSTSQLSQKLKTTYKASTSKIVSSFKTTTSRAICQLVKDYVGHRDGLWDVSVTRTQPVVLGTASADHTALLWSIETGKCLIKYVGHAGSVNSIKFHPTEQIALTASGDQTAHIWRYMVQLPTPQPTADTSISGEEEVDFSDKDENDGDGDASSDCPTVRVPLTALKSHQGVVIAADWLVGGKQAVTASWDRTANLYDVETSELVHSLTGHDQELTHCCTHPTQRLVVTSSRDTTFRLWDFRDPSIHSVNVFQGHTDTVTSAVFTVGDNVVSGSDDRTVKVWDLKNMRSPIATIRTDSAINRISVSVGQRIIALPHDNRQVRLFDMSGVRLARLPRSNRQGHRRMVCCCAWSEDHPTCNLFTCGFDRQAIGWNINIPALLQEK</sequence>
<proteinExistence type="evidence at transcript level"/>
<dbReference type="EMBL" id="BC136196">
    <property type="protein sequence ID" value="AAI36197.1"/>
    <property type="molecule type" value="mRNA"/>
</dbReference>
<dbReference type="RefSeq" id="NP_001096465.1">
    <property type="nucleotide sequence ID" value="NM_001102995.1"/>
</dbReference>
<dbReference type="SMR" id="A4IIX9"/>
<dbReference type="FunCoup" id="A4IIX9">
    <property type="interactions" value="4175"/>
</dbReference>
<dbReference type="STRING" id="8364.ENSXETP00000029643"/>
<dbReference type="PaxDb" id="8364-ENSXETP00000039219"/>
<dbReference type="DNASU" id="100125083"/>
<dbReference type="GeneID" id="100125083"/>
<dbReference type="KEGG" id="xtr:100125083"/>
<dbReference type="AGR" id="Xenbase:XB-GENE-5740160"/>
<dbReference type="CTD" id="22884"/>
<dbReference type="Xenbase" id="XB-GENE-5740160">
    <property type="gene designation" value="wdr37"/>
</dbReference>
<dbReference type="eggNOG" id="KOG0300">
    <property type="taxonomic scope" value="Eukaryota"/>
</dbReference>
<dbReference type="HOGENOM" id="CLU_036428_0_0_1"/>
<dbReference type="InParanoid" id="A4IIX9"/>
<dbReference type="OrthoDB" id="9984207at2759"/>
<dbReference type="Proteomes" id="UP000008143">
    <property type="component" value="Chromosome 6"/>
</dbReference>
<dbReference type="GO" id="GO:0005737">
    <property type="term" value="C:cytoplasm"/>
    <property type="evidence" value="ECO:0000250"/>
    <property type="project" value="UniProtKB"/>
</dbReference>
<dbReference type="GO" id="GO:0005634">
    <property type="term" value="C:nucleus"/>
    <property type="evidence" value="ECO:0000250"/>
    <property type="project" value="UniProtKB"/>
</dbReference>
<dbReference type="CDD" id="cd00200">
    <property type="entry name" value="WD40"/>
    <property type="match status" value="1"/>
</dbReference>
<dbReference type="FunFam" id="2.130.10.10:FF:000511">
    <property type="entry name" value="WD repeat domain 37"/>
    <property type="match status" value="1"/>
</dbReference>
<dbReference type="FunFam" id="2.130.10.10:FF:000080">
    <property type="entry name" value="WD repeat-containing protein 37"/>
    <property type="match status" value="1"/>
</dbReference>
<dbReference type="FunFam" id="2.130.10.10:FF:000152">
    <property type="entry name" value="WD repeat-containing protein 37"/>
    <property type="match status" value="1"/>
</dbReference>
<dbReference type="Gene3D" id="2.130.10.10">
    <property type="entry name" value="YVTN repeat-like/Quinoprotein amine dehydrogenase"/>
    <property type="match status" value="3"/>
</dbReference>
<dbReference type="InterPro" id="IPR020472">
    <property type="entry name" value="G-protein_beta_WD-40_rep"/>
</dbReference>
<dbReference type="InterPro" id="IPR015943">
    <property type="entry name" value="WD40/YVTN_repeat-like_dom_sf"/>
</dbReference>
<dbReference type="InterPro" id="IPR019775">
    <property type="entry name" value="WD40_repeat_CS"/>
</dbReference>
<dbReference type="InterPro" id="IPR036322">
    <property type="entry name" value="WD40_repeat_dom_sf"/>
</dbReference>
<dbReference type="InterPro" id="IPR001680">
    <property type="entry name" value="WD40_rpt"/>
</dbReference>
<dbReference type="PANTHER" id="PTHR19855:SF12">
    <property type="entry name" value="WD REPEAT-CONTAINING PROTEIN 37"/>
    <property type="match status" value="1"/>
</dbReference>
<dbReference type="PANTHER" id="PTHR19855">
    <property type="entry name" value="WD40 REPEAT PROTEIN 12, 37"/>
    <property type="match status" value="1"/>
</dbReference>
<dbReference type="Pfam" id="PF00400">
    <property type="entry name" value="WD40"/>
    <property type="match status" value="6"/>
</dbReference>
<dbReference type="PRINTS" id="PR00320">
    <property type="entry name" value="GPROTEINBRPT"/>
</dbReference>
<dbReference type="SMART" id="SM00320">
    <property type="entry name" value="WD40"/>
    <property type="match status" value="7"/>
</dbReference>
<dbReference type="SUPFAM" id="SSF50978">
    <property type="entry name" value="WD40 repeat-like"/>
    <property type="match status" value="1"/>
</dbReference>
<dbReference type="PROSITE" id="PS00678">
    <property type="entry name" value="WD_REPEATS_1"/>
    <property type="match status" value="2"/>
</dbReference>
<dbReference type="PROSITE" id="PS50082">
    <property type="entry name" value="WD_REPEATS_2"/>
    <property type="match status" value="4"/>
</dbReference>
<dbReference type="PROSITE" id="PS50294">
    <property type="entry name" value="WD_REPEATS_REGION"/>
    <property type="match status" value="1"/>
</dbReference>